<feature type="peptide" id="PRO_0000371771" description="FMRFamide-12">
    <location>
        <begin position="1"/>
        <end position="10"/>
    </location>
</feature>
<feature type="modified residue" description="Phenylalanine amide" evidence="2">
    <location>
        <position position="10"/>
    </location>
</feature>
<keyword id="KW-0027">Amidation</keyword>
<keyword id="KW-0903">Direct protein sequencing</keyword>
<keyword id="KW-0527">Neuropeptide</keyword>
<keyword id="KW-0964">Secreted</keyword>
<comment type="subcellular location">
    <subcellularLocation>
        <location evidence="4">Secreted</location>
    </subcellularLocation>
</comment>
<comment type="mass spectrometry"/>
<comment type="similarity">
    <text evidence="1">Belongs to the FARP (FMRFamide related peptide) family.</text>
</comment>
<name>FAR12_SARBU</name>
<accession>P85470</accession>
<evidence type="ECO:0000255" key="1"/>
<evidence type="ECO:0000269" key="2">
    <source>
    </source>
</evidence>
<evidence type="ECO:0000303" key="3">
    <source>
    </source>
</evidence>
<evidence type="ECO:0000305" key="4"/>
<reference evidence="4" key="1">
    <citation type="journal article" date="2009" name="Gen. Comp. Endocrinol.">
        <title>Extended FMRFamides in dipteran insects: conservative expression in the neuroendocrine system is accompanied by rapid sequence evolution.</title>
        <authorList>
            <person name="Rahman M.M."/>
            <person name="Fromm B."/>
            <person name="Neupert S."/>
            <person name="Kreusch S."/>
            <person name="Predel R."/>
        </authorList>
    </citation>
    <scope>PROTEIN SEQUENCE</scope>
    <scope>MASS SPECTROMETRY</scope>
    <scope>AMIDATION AT PHE-10</scope>
    <source>
        <tissue evidence="2">Dorsal ganglionic sheath</tissue>
    </source>
</reference>
<organism>
    <name type="scientific">Sarcophaga bullata</name>
    <name type="common">Grey flesh fly</name>
    <name type="synonym">Neobellieria bullata</name>
    <dbReference type="NCBI Taxonomy" id="7385"/>
    <lineage>
        <taxon>Eukaryota</taxon>
        <taxon>Metazoa</taxon>
        <taxon>Ecdysozoa</taxon>
        <taxon>Arthropoda</taxon>
        <taxon>Hexapoda</taxon>
        <taxon>Insecta</taxon>
        <taxon>Pterygota</taxon>
        <taxon>Neoptera</taxon>
        <taxon>Endopterygota</taxon>
        <taxon>Diptera</taxon>
        <taxon>Brachycera</taxon>
        <taxon>Muscomorpha</taxon>
        <taxon>Oestroidea</taxon>
        <taxon>Sarcophagidae</taxon>
        <taxon>Sarcophaga</taxon>
        <taxon>Neobellieria</taxon>
    </lineage>
</organism>
<protein>
    <recommendedName>
        <fullName>FMRFamide-12</fullName>
    </recommendedName>
    <alternativeName>
        <fullName evidence="3">SabFMRFamide-12</fullName>
    </alternativeName>
</protein>
<proteinExistence type="evidence at protein level"/>
<dbReference type="GO" id="GO:0005576">
    <property type="term" value="C:extracellular region"/>
    <property type="evidence" value="ECO:0007669"/>
    <property type="project" value="UniProtKB-SubCell"/>
</dbReference>
<dbReference type="GO" id="GO:0007218">
    <property type="term" value="P:neuropeptide signaling pathway"/>
    <property type="evidence" value="ECO:0007669"/>
    <property type="project" value="UniProtKB-KW"/>
</dbReference>
<sequence>SAPSQDFMRF</sequence>